<dbReference type="EMBL" id="AE000511">
    <property type="protein sequence ID" value="AAD07874.1"/>
    <property type="molecule type" value="Genomic_DNA"/>
</dbReference>
<dbReference type="PIR" id="H64622">
    <property type="entry name" value="H64622"/>
</dbReference>
<dbReference type="RefSeq" id="NP_207617.1">
    <property type="nucleotide sequence ID" value="NC_000915.1"/>
</dbReference>
<dbReference type="RefSeq" id="WP_000020199.1">
    <property type="nucleotide sequence ID" value="NC_018939.1"/>
</dbReference>
<dbReference type="PDB" id="6BKV">
    <property type="method" value="X-ray"/>
    <property type="resolution" value="2.35 A"/>
    <property type="chains" value="A/B=1-106"/>
</dbReference>
<dbReference type="PDBsum" id="6BKV"/>
<dbReference type="SMR" id="P66928"/>
<dbReference type="FunCoup" id="P66928">
    <property type="interactions" value="351"/>
</dbReference>
<dbReference type="IntAct" id="P66928">
    <property type="interactions" value="3"/>
</dbReference>
<dbReference type="STRING" id="85962.HP_0824"/>
<dbReference type="PaxDb" id="85962-C694_04220"/>
<dbReference type="EnsemblBacteria" id="AAD07874">
    <property type="protein sequence ID" value="AAD07874"/>
    <property type="gene ID" value="HP_0824"/>
</dbReference>
<dbReference type="KEGG" id="heo:C694_04220"/>
<dbReference type="KEGG" id="hpy:HP_0824"/>
<dbReference type="PATRIC" id="fig|85962.47.peg.878"/>
<dbReference type="eggNOG" id="COG3118">
    <property type="taxonomic scope" value="Bacteria"/>
</dbReference>
<dbReference type="InParanoid" id="P66928"/>
<dbReference type="OrthoDB" id="9790390at2"/>
<dbReference type="PhylomeDB" id="P66928"/>
<dbReference type="Proteomes" id="UP000000429">
    <property type="component" value="Chromosome"/>
</dbReference>
<dbReference type="GO" id="GO:0015035">
    <property type="term" value="F:protein-disulfide reductase activity"/>
    <property type="evidence" value="ECO:0007669"/>
    <property type="project" value="InterPro"/>
</dbReference>
<dbReference type="GO" id="GO:0045454">
    <property type="term" value="P:cell redox homeostasis"/>
    <property type="evidence" value="ECO:0000318"/>
    <property type="project" value="GO_Central"/>
</dbReference>
<dbReference type="CDD" id="cd02947">
    <property type="entry name" value="TRX_family"/>
    <property type="match status" value="1"/>
</dbReference>
<dbReference type="FunFam" id="3.40.30.10:FF:000001">
    <property type="entry name" value="Thioredoxin"/>
    <property type="match status" value="1"/>
</dbReference>
<dbReference type="Gene3D" id="3.40.30.10">
    <property type="entry name" value="Glutaredoxin"/>
    <property type="match status" value="1"/>
</dbReference>
<dbReference type="InterPro" id="IPR005746">
    <property type="entry name" value="Thioredoxin"/>
</dbReference>
<dbReference type="InterPro" id="IPR036249">
    <property type="entry name" value="Thioredoxin-like_sf"/>
</dbReference>
<dbReference type="InterPro" id="IPR017937">
    <property type="entry name" value="Thioredoxin_CS"/>
</dbReference>
<dbReference type="InterPro" id="IPR013766">
    <property type="entry name" value="Thioredoxin_domain"/>
</dbReference>
<dbReference type="NCBIfam" id="TIGR01068">
    <property type="entry name" value="thioredoxin"/>
    <property type="match status" value="1"/>
</dbReference>
<dbReference type="PANTHER" id="PTHR45663">
    <property type="entry name" value="GEO12009P1"/>
    <property type="match status" value="1"/>
</dbReference>
<dbReference type="PANTHER" id="PTHR45663:SF11">
    <property type="entry name" value="GEO12009P1"/>
    <property type="match status" value="1"/>
</dbReference>
<dbReference type="Pfam" id="PF00085">
    <property type="entry name" value="Thioredoxin"/>
    <property type="match status" value="1"/>
</dbReference>
<dbReference type="PIRSF" id="PIRSF000077">
    <property type="entry name" value="Thioredoxin"/>
    <property type="match status" value="1"/>
</dbReference>
<dbReference type="PRINTS" id="PR00421">
    <property type="entry name" value="THIOREDOXIN"/>
</dbReference>
<dbReference type="SUPFAM" id="SSF52833">
    <property type="entry name" value="Thioredoxin-like"/>
    <property type="match status" value="1"/>
</dbReference>
<dbReference type="PROSITE" id="PS00194">
    <property type="entry name" value="THIOREDOXIN_1"/>
    <property type="match status" value="1"/>
</dbReference>
<dbReference type="PROSITE" id="PS51352">
    <property type="entry name" value="THIOREDOXIN_2"/>
    <property type="match status" value="1"/>
</dbReference>
<reference key="1">
    <citation type="journal article" date="1997" name="Nature">
        <title>The complete genome sequence of the gastric pathogen Helicobacter pylori.</title>
        <authorList>
            <person name="Tomb J.-F."/>
            <person name="White O."/>
            <person name="Kerlavage A.R."/>
            <person name="Clayton R.A."/>
            <person name="Sutton G.G."/>
            <person name="Fleischmann R.D."/>
            <person name="Ketchum K.A."/>
            <person name="Klenk H.-P."/>
            <person name="Gill S.R."/>
            <person name="Dougherty B.A."/>
            <person name="Nelson K.E."/>
            <person name="Quackenbush J."/>
            <person name="Zhou L."/>
            <person name="Kirkness E.F."/>
            <person name="Peterson S.N."/>
            <person name="Loftus B.J."/>
            <person name="Richardson D.L."/>
            <person name="Dodson R.J."/>
            <person name="Khalak H.G."/>
            <person name="Glodek A."/>
            <person name="McKenney K."/>
            <person name="FitzGerald L.M."/>
            <person name="Lee N."/>
            <person name="Adams M.D."/>
            <person name="Hickey E.K."/>
            <person name="Berg D.E."/>
            <person name="Gocayne J.D."/>
            <person name="Utterback T.R."/>
            <person name="Peterson J.D."/>
            <person name="Kelley J.M."/>
            <person name="Cotton M.D."/>
            <person name="Weidman J.F."/>
            <person name="Fujii C."/>
            <person name="Bowman C."/>
            <person name="Watthey L."/>
            <person name="Wallin E."/>
            <person name="Hayes W.S."/>
            <person name="Borodovsky M."/>
            <person name="Karp P.D."/>
            <person name="Smith H.O."/>
            <person name="Fraser C.M."/>
            <person name="Venter J.C."/>
        </authorList>
    </citation>
    <scope>NUCLEOTIDE SEQUENCE [LARGE SCALE GENOMIC DNA]</scope>
    <source>
        <strain>ATCC 700392 / 26695</strain>
    </source>
</reference>
<keyword id="KW-0002">3D-structure</keyword>
<keyword id="KW-1015">Disulfide bond</keyword>
<keyword id="KW-0249">Electron transport</keyword>
<keyword id="KW-0676">Redox-active center</keyword>
<keyword id="KW-1185">Reference proteome</keyword>
<keyword id="KW-0813">Transport</keyword>
<name>THIO_HELPY</name>
<evidence type="ECO:0000250" key="1"/>
<evidence type="ECO:0000255" key="2">
    <source>
        <dbReference type="PROSITE-ProRule" id="PRU00691"/>
    </source>
</evidence>
<evidence type="ECO:0000305" key="3"/>
<evidence type="ECO:0007829" key="4">
    <source>
        <dbReference type="PDB" id="6BKV"/>
    </source>
</evidence>
<comment type="function">
    <text evidence="1">Participates in various redox reactions through the reversible oxidation of its active center dithiol to a disulfide and catalyzes dithiol-disulfide exchange reactions.</text>
</comment>
<comment type="similarity">
    <text evidence="3">Belongs to the thioredoxin family.</text>
</comment>
<proteinExistence type="evidence at protein level"/>
<accession>P66928</accession>
<accession>P56430</accession>
<gene>
    <name type="primary">trxA</name>
    <name type="ordered locus">HP_0824</name>
</gene>
<organism>
    <name type="scientific">Helicobacter pylori (strain ATCC 700392 / 26695)</name>
    <name type="common">Campylobacter pylori</name>
    <dbReference type="NCBI Taxonomy" id="85962"/>
    <lineage>
        <taxon>Bacteria</taxon>
        <taxon>Pseudomonadati</taxon>
        <taxon>Campylobacterota</taxon>
        <taxon>Epsilonproteobacteria</taxon>
        <taxon>Campylobacterales</taxon>
        <taxon>Helicobacteraceae</taxon>
        <taxon>Helicobacter</taxon>
    </lineage>
</organism>
<protein>
    <recommendedName>
        <fullName>Thioredoxin</fullName>
        <shortName>Trx</shortName>
    </recommendedName>
</protein>
<sequence>MSHYIELTEENFESTIKKGVALVDFWAPWCGPCKMLSPVIDELASEYEGKAKICKVNTDEQEELSAKFGIRSIPTLLFTKDGEVVHQLVGVQTKVALKEQLNKLLG</sequence>
<feature type="chain" id="PRO_0000120108" description="Thioredoxin">
    <location>
        <begin position="1"/>
        <end position="106"/>
    </location>
</feature>
<feature type="domain" description="Thioredoxin" evidence="2">
    <location>
        <begin position="2"/>
        <end position="106"/>
    </location>
</feature>
<feature type="disulfide bond" description="Redox-active" evidence="2">
    <location>
        <begin position="30"/>
        <end position="33"/>
    </location>
</feature>
<feature type="strand" evidence="4">
    <location>
        <begin position="4"/>
        <end position="6"/>
    </location>
</feature>
<feature type="turn" evidence="4">
    <location>
        <begin position="9"/>
        <end position="11"/>
    </location>
</feature>
<feature type="helix" evidence="4">
    <location>
        <begin position="12"/>
        <end position="16"/>
    </location>
</feature>
<feature type="strand" evidence="4">
    <location>
        <begin position="17"/>
        <end position="26"/>
    </location>
</feature>
<feature type="helix" evidence="4">
    <location>
        <begin position="31"/>
        <end position="46"/>
    </location>
</feature>
<feature type="turn" evidence="4">
    <location>
        <begin position="47"/>
        <end position="50"/>
    </location>
</feature>
<feature type="strand" evidence="4">
    <location>
        <begin position="51"/>
        <end position="57"/>
    </location>
</feature>
<feature type="turn" evidence="4">
    <location>
        <begin position="58"/>
        <end position="60"/>
    </location>
</feature>
<feature type="helix" evidence="4">
    <location>
        <begin position="62"/>
        <end position="67"/>
    </location>
</feature>
<feature type="strand" evidence="4">
    <location>
        <begin position="72"/>
        <end position="80"/>
    </location>
</feature>
<feature type="strand" evidence="4">
    <location>
        <begin position="83"/>
        <end position="91"/>
    </location>
</feature>
<feature type="helix" evidence="4">
    <location>
        <begin position="94"/>
        <end position="104"/>
    </location>
</feature>